<feature type="chain" id="PRO_0000425212" description="Protein hold'em">
    <location>
        <begin position="1"/>
        <end position="486"/>
    </location>
</feature>
<feature type="DNA-binding region" description="OB">
    <location>
        <begin position="166"/>
        <end position="285"/>
    </location>
</feature>
<feature type="sequence conflict" description="In Ref. 3; ADD31633." evidence="2" ref="3">
    <original>V</original>
    <variation>F</variation>
    <location>
        <position position="23"/>
    </location>
</feature>
<feature type="sequence conflict" description="In Ref. 3; ADD31633." evidence="2" ref="3">
    <original>M</original>
    <variation>I</variation>
    <location>
        <position position="91"/>
    </location>
</feature>
<comment type="function">
    <text evidence="1">Single-stranded DNA-binding protein required for meiosis. May be involved in the resolution of recombination intermediates into crossovers in the meiotic recombination pathway.</text>
</comment>
<comment type="subunit">
    <text evidence="1">Interacts with mei-9 and Ercc1.</text>
</comment>
<comment type="disruption phenotype">
    <text evidence="1">Reduced meiotic crossover formation and sensitivity to the DNA-damaging agent methyl methanesulfonate (MMS).</text>
</comment>
<comment type="similarity">
    <text evidence="2">Belongs to the MEIOB family.</text>
</comment>
<dbReference type="EMBL" id="AE014298">
    <property type="protein sequence ID" value="AAF46293.1"/>
    <property type="molecule type" value="Genomic_DNA"/>
</dbReference>
<dbReference type="EMBL" id="BT122053">
    <property type="protein sequence ID" value="ADD31633.1"/>
    <property type="molecule type" value="mRNA"/>
</dbReference>
<dbReference type="RefSeq" id="NP_572422.1">
    <property type="nucleotide sequence ID" value="NM_132194.1"/>
</dbReference>
<dbReference type="SMR" id="Q9W3M9"/>
<dbReference type="BioGRID" id="58179">
    <property type="interactions" value="6"/>
</dbReference>
<dbReference type="FunCoup" id="Q9W3M9">
    <property type="interactions" value="3"/>
</dbReference>
<dbReference type="STRING" id="7227.FBpp0071085"/>
<dbReference type="PaxDb" id="7227-FBpp0071085"/>
<dbReference type="EnsemblMetazoa" id="FBtr0071133">
    <property type="protein sequence ID" value="FBpp0071085"/>
    <property type="gene ID" value="FBgn0029977"/>
</dbReference>
<dbReference type="GeneID" id="31705"/>
<dbReference type="KEGG" id="dme:Dmel_CG15329"/>
<dbReference type="UCSC" id="CG15329-RA">
    <property type="organism name" value="d. melanogaster"/>
</dbReference>
<dbReference type="AGR" id="FB:FBgn0029977"/>
<dbReference type="CTD" id="31705"/>
<dbReference type="FlyBase" id="FBgn0029977">
    <property type="gene designation" value="hdm"/>
</dbReference>
<dbReference type="VEuPathDB" id="VectorBase:FBgn0029977"/>
<dbReference type="eggNOG" id="KOG0851">
    <property type="taxonomic scope" value="Eukaryota"/>
</dbReference>
<dbReference type="GeneTree" id="ENSGT00390000001723"/>
<dbReference type="HOGENOM" id="CLU_042457_1_0_1"/>
<dbReference type="InParanoid" id="Q9W3M9"/>
<dbReference type="OMA" id="IYLKFVV"/>
<dbReference type="OrthoDB" id="9937820at2759"/>
<dbReference type="PhylomeDB" id="Q9W3M9"/>
<dbReference type="BioGRID-ORCS" id="31705">
    <property type="hits" value="0 hits in 3 CRISPR screens"/>
</dbReference>
<dbReference type="GenomeRNAi" id="31705"/>
<dbReference type="PRO" id="PR:Q9W3M9"/>
<dbReference type="Proteomes" id="UP000000803">
    <property type="component" value="Chromosome X"/>
</dbReference>
<dbReference type="Bgee" id="FBgn0029977">
    <property type="expression patterns" value="Expressed in neural cell in brain and 2 other cell types or tissues"/>
</dbReference>
<dbReference type="GO" id="GO:0032991">
    <property type="term" value="C:protein-containing complex"/>
    <property type="evidence" value="ECO:0000353"/>
    <property type="project" value="FlyBase"/>
</dbReference>
<dbReference type="GO" id="GO:0008310">
    <property type="term" value="F:single-stranded DNA 3'-5' DNA exonuclease activity"/>
    <property type="evidence" value="ECO:0000318"/>
    <property type="project" value="GO_Central"/>
</dbReference>
<dbReference type="GO" id="GO:0003697">
    <property type="term" value="F:single-stranded DNA binding"/>
    <property type="evidence" value="ECO:0000255"/>
    <property type="project" value="FlyBase"/>
</dbReference>
<dbReference type="GO" id="GO:0006302">
    <property type="term" value="P:double-strand break repair"/>
    <property type="evidence" value="ECO:0000315"/>
    <property type="project" value="FlyBase"/>
</dbReference>
<dbReference type="GO" id="GO:0030716">
    <property type="term" value="P:oocyte fate determination"/>
    <property type="evidence" value="ECO:0000315"/>
    <property type="project" value="FlyBase"/>
</dbReference>
<dbReference type="GO" id="GO:0007131">
    <property type="term" value="P:reciprocal meiotic recombination"/>
    <property type="evidence" value="ECO:0000315"/>
    <property type="project" value="FlyBase"/>
</dbReference>
<dbReference type="GO" id="GO:0000712">
    <property type="term" value="P:resolution of meiotic recombination intermediates"/>
    <property type="evidence" value="ECO:0000315"/>
    <property type="project" value="FlyBase"/>
</dbReference>
<dbReference type="Gene3D" id="2.40.50.140">
    <property type="entry name" value="Nucleic acid-binding proteins"/>
    <property type="match status" value="1"/>
</dbReference>
<dbReference type="InterPro" id="IPR052469">
    <property type="entry name" value="MEIOB"/>
</dbReference>
<dbReference type="InterPro" id="IPR012340">
    <property type="entry name" value="NA-bd_OB-fold"/>
</dbReference>
<dbReference type="InterPro" id="IPR056880">
    <property type="entry name" value="OB_MEIOB_N"/>
</dbReference>
<dbReference type="PANTHER" id="PTHR21166">
    <property type="entry name" value="CELL DIVISION CONTROL PROTEIN 24 OB DOMAIN-CONTAINING PROTEIN-RELATED"/>
    <property type="match status" value="1"/>
</dbReference>
<dbReference type="PANTHER" id="PTHR21166:SF2">
    <property type="entry name" value="CELL DIVISION CONTROL PROTEIN 24 OB DOMAIN-CONTAINING PROTEIN-RELATED"/>
    <property type="match status" value="1"/>
</dbReference>
<dbReference type="Pfam" id="PF24903">
    <property type="entry name" value="OB_MEIOB_N"/>
    <property type="match status" value="1"/>
</dbReference>
<dbReference type="SUPFAM" id="SSF50249">
    <property type="entry name" value="Nucleic acid-binding proteins"/>
    <property type="match status" value="1"/>
</dbReference>
<name>HDM_DROME</name>
<evidence type="ECO:0000269" key="1">
    <source>
    </source>
</evidence>
<evidence type="ECO:0000305" key="2"/>
<proteinExistence type="evidence at protein level"/>
<keyword id="KW-0238">DNA-binding</keyword>
<keyword id="KW-0469">Meiosis</keyword>
<keyword id="KW-1185">Reference proteome</keyword>
<accession>Q9W3M9</accession>
<accession>D3PK97</accession>
<organism>
    <name type="scientific">Drosophila melanogaster</name>
    <name type="common">Fruit fly</name>
    <dbReference type="NCBI Taxonomy" id="7227"/>
    <lineage>
        <taxon>Eukaryota</taxon>
        <taxon>Metazoa</taxon>
        <taxon>Ecdysozoa</taxon>
        <taxon>Arthropoda</taxon>
        <taxon>Hexapoda</taxon>
        <taxon>Insecta</taxon>
        <taxon>Pterygota</taxon>
        <taxon>Neoptera</taxon>
        <taxon>Endopterygota</taxon>
        <taxon>Diptera</taxon>
        <taxon>Brachycera</taxon>
        <taxon>Muscomorpha</taxon>
        <taxon>Ephydroidea</taxon>
        <taxon>Drosophilidae</taxon>
        <taxon>Drosophila</taxon>
        <taxon>Sophophora</taxon>
    </lineage>
</organism>
<reference key="1">
    <citation type="journal article" date="2000" name="Science">
        <title>The genome sequence of Drosophila melanogaster.</title>
        <authorList>
            <person name="Adams M.D."/>
            <person name="Celniker S.E."/>
            <person name="Holt R.A."/>
            <person name="Evans C.A."/>
            <person name="Gocayne J.D."/>
            <person name="Amanatides P.G."/>
            <person name="Scherer S.E."/>
            <person name="Li P.W."/>
            <person name="Hoskins R.A."/>
            <person name="Galle R.F."/>
            <person name="George R.A."/>
            <person name="Lewis S.E."/>
            <person name="Richards S."/>
            <person name="Ashburner M."/>
            <person name="Henderson S.N."/>
            <person name="Sutton G.G."/>
            <person name="Wortman J.R."/>
            <person name="Yandell M.D."/>
            <person name="Zhang Q."/>
            <person name="Chen L.X."/>
            <person name="Brandon R.C."/>
            <person name="Rogers Y.-H.C."/>
            <person name="Blazej R.G."/>
            <person name="Champe M."/>
            <person name="Pfeiffer B.D."/>
            <person name="Wan K.H."/>
            <person name="Doyle C."/>
            <person name="Baxter E.G."/>
            <person name="Helt G."/>
            <person name="Nelson C.R."/>
            <person name="Miklos G.L.G."/>
            <person name="Abril J.F."/>
            <person name="Agbayani A."/>
            <person name="An H.-J."/>
            <person name="Andrews-Pfannkoch C."/>
            <person name="Baldwin D."/>
            <person name="Ballew R.M."/>
            <person name="Basu A."/>
            <person name="Baxendale J."/>
            <person name="Bayraktaroglu L."/>
            <person name="Beasley E.M."/>
            <person name="Beeson K.Y."/>
            <person name="Benos P.V."/>
            <person name="Berman B.P."/>
            <person name="Bhandari D."/>
            <person name="Bolshakov S."/>
            <person name="Borkova D."/>
            <person name="Botchan M.R."/>
            <person name="Bouck J."/>
            <person name="Brokstein P."/>
            <person name="Brottier P."/>
            <person name="Burtis K.C."/>
            <person name="Busam D.A."/>
            <person name="Butler H."/>
            <person name="Cadieu E."/>
            <person name="Center A."/>
            <person name="Chandra I."/>
            <person name="Cherry J.M."/>
            <person name="Cawley S."/>
            <person name="Dahlke C."/>
            <person name="Davenport L.B."/>
            <person name="Davies P."/>
            <person name="de Pablos B."/>
            <person name="Delcher A."/>
            <person name="Deng Z."/>
            <person name="Mays A.D."/>
            <person name="Dew I."/>
            <person name="Dietz S.M."/>
            <person name="Dodson K."/>
            <person name="Doup L.E."/>
            <person name="Downes M."/>
            <person name="Dugan-Rocha S."/>
            <person name="Dunkov B.C."/>
            <person name="Dunn P."/>
            <person name="Durbin K.J."/>
            <person name="Evangelista C.C."/>
            <person name="Ferraz C."/>
            <person name="Ferriera S."/>
            <person name="Fleischmann W."/>
            <person name="Fosler C."/>
            <person name="Gabrielian A.E."/>
            <person name="Garg N.S."/>
            <person name="Gelbart W.M."/>
            <person name="Glasser K."/>
            <person name="Glodek A."/>
            <person name="Gong F."/>
            <person name="Gorrell J.H."/>
            <person name="Gu Z."/>
            <person name="Guan P."/>
            <person name="Harris M."/>
            <person name="Harris N.L."/>
            <person name="Harvey D.A."/>
            <person name="Heiman T.J."/>
            <person name="Hernandez J.R."/>
            <person name="Houck J."/>
            <person name="Hostin D."/>
            <person name="Houston K.A."/>
            <person name="Howland T.J."/>
            <person name="Wei M.-H."/>
            <person name="Ibegwam C."/>
            <person name="Jalali M."/>
            <person name="Kalush F."/>
            <person name="Karpen G.H."/>
            <person name="Ke Z."/>
            <person name="Kennison J.A."/>
            <person name="Ketchum K.A."/>
            <person name="Kimmel B.E."/>
            <person name="Kodira C.D."/>
            <person name="Kraft C.L."/>
            <person name="Kravitz S."/>
            <person name="Kulp D."/>
            <person name="Lai Z."/>
            <person name="Lasko P."/>
            <person name="Lei Y."/>
            <person name="Levitsky A.A."/>
            <person name="Li J.H."/>
            <person name="Li Z."/>
            <person name="Liang Y."/>
            <person name="Lin X."/>
            <person name="Liu X."/>
            <person name="Mattei B."/>
            <person name="McIntosh T.C."/>
            <person name="McLeod M.P."/>
            <person name="McPherson D."/>
            <person name="Merkulov G."/>
            <person name="Milshina N.V."/>
            <person name="Mobarry C."/>
            <person name="Morris J."/>
            <person name="Moshrefi A."/>
            <person name="Mount S.M."/>
            <person name="Moy M."/>
            <person name="Murphy B."/>
            <person name="Murphy L."/>
            <person name="Muzny D.M."/>
            <person name="Nelson D.L."/>
            <person name="Nelson D.R."/>
            <person name="Nelson K.A."/>
            <person name="Nixon K."/>
            <person name="Nusskern D.R."/>
            <person name="Pacleb J.M."/>
            <person name="Palazzolo M."/>
            <person name="Pittman G.S."/>
            <person name="Pan S."/>
            <person name="Pollard J."/>
            <person name="Puri V."/>
            <person name="Reese M.G."/>
            <person name="Reinert K."/>
            <person name="Remington K."/>
            <person name="Saunders R.D.C."/>
            <person name="Scheeler F."/>
            <person name="Shen H."/>
            <person name="Shue B.C."/>
            <person name="Siden-Kiamos I."/>
            <person name="Simpson M."/>
            <person name="Skupski M.P."/>
            <person name="Smith T.J."/>
            <person name="Spier E."/>
            <person name="Spradling A.C."/>
            <person name="Stapleton M."/>
            <person name="Strong R."/>
            <person name="Sun E."/>
            <person name="Svirskas R."/>
            <person name="Tector C."/>
            <person name="Turner R."/>
            <person name="Venter E."/>
            <person name="Wang A.H."/>
            <person name="Wang X."/>
            <person name="Wang Z.-Y."/>
            <person name="Wassarman D.A."/>
            <person name="Weinstock G.M."/>
            <person name="Weissenbach J."/>
            <person name="Williams S.M."/>
            <person name="Woodage T."/>
            <person name="Worley K.C."/>
            <person name="Wu D."/>
            <person name="Yang S."/>
            <person name="Yao Q.A."/>
            <person name="Ye J."/>
            <person name="Yeh R.-F."/>
            <person name="Zaveri J.S."/>
            <person name="Zhan M."/>
            <person name="Zhang G."/>
            <person name="Zhao Q."/>
            <person name="Zheng L."/>
            <person name="Zheng X.H."/>
            <person name="Zhong F.N."/>
            <person name="Zhong W."/>
            <person name="Zhou X."/>
            <person name="Zhu S.C."/>
            <person name="Zhu X."/>
            <person name="Smith H.O."/>
            <person name="Gibbs R.A."/>
            <person name="Myers E.W."/>
            <person name="Rubin G.M."/>
            <person name="Venter J.C."/>
        </authorList>
    </citation>
    <scope>NUCLEOTIDE SEQUENCE [LARGE SCALE GENOMIC DNA]</scope>
    <source>
        <strain>Berkeley</strain>
    </source>
</reference>
<reference key="2">
    <citation type="journal article" date="2002" name="Genome Biol.">
        <title>Annotation of the Drosophila melanogaster euchromatic genome: a systematic review.</title>
        <authorList>
            <person name="Misra S."/>
            <person name="Crosby M.A."/>
            <person name="Mungall C.J."/>
            <person name="Matthews B.B."/>
            <person name="Campbell K.S."/>
            <person name="Hradecky P."/>
            <person name="Huang Y."/>
            <person name="Kaminker J.S."/>
            <person name="Millburn G.H."/>
            <person name="Prochnik S.E."/>
            <person name="Smith C.D."/>
            <person name="Tupy J.L."/>
            <person name="Whitfield E.J."/>
            <person name="Bayraktaroglu L."/>
            <person name="Berman B.P."/>
            <person name="Bettencourt B.R."/>
            <person name="Celniker S.E."/>
            <person name="de Grey A.D.N.J."/>
            <person name="Drysdale R.A."/>
            <person name="Harris N.L."/>
            <person name="Richter J."/>
            <person name="Russo S."/>
            <person name="Schroeder A.J."/>
            <person name="Shu S.Q."/>
            <person name="Stapleton M."/>
            <person name="Yamada C."/>
            <person name="Ashburner M."/>
            <person name="Gelbart W.M."/>
            <person name="Rubin G.M."/>
            <person name="Lewis S.E."/>
        </authorList>
    </citation>
    <scope>GENOME REANNOTATION</scope>
    <source>
        <strain>Berkeley</strain>
    </source>
</reference>
<reference key="3">
    <citation type="submission" date="2010-03" db="EMBL/GenBank/DDBJ databases">
        <authorList>
            <person name="Carlson J."/>
            <person name="Booth B."/>
            <person name="Frise E."/>
            <person name="Park S."/>
            <person name="Wan K."/>
            <person name="Yu C."/>
            <person name="Celniker S."/>
        </authorList>
    </citation>
    <scope>NUCLEOTIDE SEQUENCE [LARGE SCALE MRNA]</scope>
    <source>
        <strain>Berkeley</strain>
    </source>
</reference>
<reference key="4">
    <citation type="journal article" date="2009" name="Genetics">
        <title>Drosophila hold'em is required for a subset of meiotic crossovers and interacts with the dna repair endonuclease complex subunits MEI-9 and ERCC1.</title>
        <authorList>
            <person name="Joyce E.F."/>
            <person name="Tanneti S.N."/>
            <person name="McKim K.S."/>
        </authorList>
    </citation>
    <scope>FUNCTION</scope>
    <scope>DISRUPTION PHENOTYPE</scope>
    <scope>INTERACTION WITH MEI-9 AND ERCC1</scope>
</reference>
<protein>
    <recommendedName>
        <fullName>Protein hold'em</fullName>
    </recommendedName>
</protein>
<gene>
    <name type="primary">hdm</name>
    <name type="ORF">CG15329</name>
</gene>
<sequence>MARRIKFQRLAEMRPTMTRFSTVALIVSKSSPNIFYDKMSGTERGVLSLTIRDSPNHLTNCKCWGQRDCVDEYAAMLQIGHVVDIVGAKVMSIPFAAPGEQRYQPQATVSCALVVNEGSGYVVRHDNDDFGQITILQQLLHQPIRPLGAVLKLADVRSGLGFPDKIITTNVNLLVVVAAVRPVRQIKRKLQGPLSEVQELLQCLEVIVIDASYPEGMLLSVWQPDWIQRAQQWQPRRTVLHLIDVRVSYSNFHRSLVLSHSNCTLICENPQAAGDDCRLLLAFAATVPLTTFSGCDQAELDNMPAVASIQAQMTVRQIYSRAEGELQDPSIHQFTAVLYGMVTKFDLDGLTSHVNRKCIACQQHIPRNLQDCASDACQQYFSLDNDEPRSISYFNINIHLSDQTGTLVEARLAGHPAERILGLRAEDFERLAEREKSELKWRFLLKYFEVRLMIKKPVGVRNHLVIVVVDMQAIPLEKLVANMVVF</sequence>